<protein>
    <recommendedName>
        <fullName>Mucin-21</fullName>
        <shortName>MUC-21</shortName>
    </recommendedName>
    <alternativeName>
        <fullName>Epiglycanin</fullName>
    </alternativeName>
</protein>
<feature type="signal peptide" evidence="1">
    <location>
        <begin position="1"/>
        <end position="24"/>
    </location>
</feature>
<feature type="chain" id="PRO_0000340102" description="Mucin-21">
    <location>
        <begin position="25"/>
        <end position="566"/>
    </location>
</feature>
<feature type="topological domain" description="Extracellular" evidence="1">
    <location>
        <begin position="25"/>
        <end position="479"/>
    </location>
</feature>
<feature type="transmembrane region" description="Helical" evidence="1">
    <location>
        <begin position="480"/>
        <end position="500"/>
    </location>
</feature>
<feature type="topological domain" description="Cytoplasmic" evidence="1">
    <location>
        <begin position="501"/>
        <end position="566"/>
    </location>
</feature>
<feature type="repeat" description="1">
    <location>
        <begin position="31"/>
        <end position="44"/>
    </location>
</feature>
<feature type="repeat" description="2">
    <location>
        <begin position="45"/>
        <end position="59"/>
    </location>
</feature>
<feature type="repeat" description="3">
    <location>
        <begin position="60"/>
        <end position="74"/>
    </location>
</feature>
<feature type="repeat" description="4">
    <location>
        <begin position="75"/>
        <end position="89"/>
    </location>
</feature>
<feature type="repeat" description="5">
    <location>
        <begin position="90"/>
        <end position="104"/>
    </location>
</feature>
<feature type="repeat" description="6">
    <location>
        <begin position="105"/>
        <end position="119"/>
    </location>
</feature>
<feature type="repeat" description="7">
    <location>
        <begin position="120"/>
        <end position="134"/>
    </location>
</feature>
<feature type="repeat" description="8">
    <location>
        <begin position="135"/>
        <end position="149"/>
    </location>
</feature>
<feature type="repeat" description="9">
    <location>
        <begin position="150"/>
        <end position="164"/>
    </location>
</feature>
<feature type="repeat" description="10">
    <location>
        <begin position="165"/>
        <end position="179"/>
    </location>
</feature>
<feature type="repeat" description="11">
    <location>
        <begin position="180"/>
        <end position="194"/>
    </location>
</feature>
<feature type="repeat" description="12">
    <location>
        <begin position="195"/>
        <end position="209"/>
    </location>
</feature>
<feature type="repeat" description="13">
    <location>
        <begin position="210"/>
        <end position="224"/>
    </location>
</feature>
<feature type="repeat" description="14">
    <location>
        <begin position="225"/>
        <end position="239"/>
    </location>
</feature>
<feature type="repeat" description="15">
    <location>
        <begin position="244"/>
        <end position="254"/>
    </location>
</feature>
<feature type="repeat" description="16">
    <location>
        <begin position="255"/>
        <end position="269"/>
    </location>
</feature>
<feature type="repeat" description="17">
    <location>
        <begin position="270"/>
        <end position="284"/>
    </location>
</feature>
<feature type="repeat" description="18">
    <location>
        <begin position="285"/>
        <end position="299"/>
    </location>
</feature>
<feature type="repeat" description="19">
    <location>
        <begin position="300"/>
        <end position="314"/>
    </location>
</feature>
<feature type="repeat" description="20">
    <location>
        <begin position="315"/>
        <end position="329"/>
    </location>
</feature>
<feature type="repeat" description="21">
    <location>
        <begin position="330"/>
        <end position="344"/>
    </location>
</feature>
<feature type="repeat" description="22">
    <location>
        <begin position="345"/>
        <end position="359"/>
    </location>
</feature>
<feature type="repeat" description="23">
    <location>
        <begin position="360"/>
        <end position="374"/>
    </location>
</feature>
<feature type="repeat" description="24">
    <location>
        <begin position="375"/>
        <end position="389"/>
    </location>
</feature>
<feature type="repeat" description="25">
    <location>
        <begin position="390"/>
        <end position="404"/>
    </location>
</feature>
<feature type="repeat" description="26">
    <location>
        <begin position="405"/>
        <end position="419"/>
    </location>
</feature>
<feature type="repeat" description="27">
    <location>
        <begin position="420"/>
        <end position="434"/>
    </location>
</feature>
<feature type="repeat" description="28">
    <location>
        <begin position="435"/>
        <end position="449"/>
    </location>
</feature>
<feature type="region of interest" description="Disordered" evidence="2">
    <location>
        <begin position="25"/>
        <end position="68"/>
    </location>
</feature>
<feature type="region of interest" description="28 X 15 AA approximate tandem repeats">
    <location>
        <begin position="31"/>
        <end position="435"/>
    </location>
</feature>
<feature type="region of interest" description="Disordered" evidence="2">
    <location>
        <begin position="106"/>
        <end position="456"/>
    </location>
</feature>
<feature type="region of interest" description="Cytoplasmic tail">
    <location>
        <begin position="521"/>
        <end position="566"/>
    </location>
</feature>
<feature type="site" description="Cleavage" evidence="1">
    <location>
        <begin position="502"/>
        <end position="503"/>
    </location>
</feature>
<feature type="glycosylation site" description="N-linked (GlcNAc...) asparagine" evidence="1">
    <location>
        <position position="25"/>
    </location>
</feature>
<feature type="splice variant" id="VSP_034188" description="In isoform 2." evidence="8">
    <original>T</original>
    <variation>TVTNSGSSVTSSGASTATNSESSTVSSRAST</variation>
    <location>
        <position position="134"/>
    </location>
</feature>
<feature type="splice variant" id="VSP_034189" description="In isoform 3." evidence="9">
    <location>
        <begin position="188"/>
        <end position="337"/>
    </location>
</feature>
<feature type="sequence variant" id="VAR_060457" description="In dbSNP:rs1634730." evidence="3 4 5 6 7">
    <original>V</original>
    <variation>A</variation>
    <location>
        <position position="98"/>
    </location>
</feature>
<feature type="sequence variant" id="VAR_043995" description="In dbSNP:rs9262324." evidence="3 4">
    <original>D</original>
    <variation>E</variation>
    <location>
        <position position="139"/>
    </location>
</feature>
<feature type="sequence variant" id="VAR_043996" description="In dbSNP:rs9262337." evidence="3 4">
    <original>E</original>
    <variation>G</variation>
    <location>
        <position position="161"/>
    </location>
</feature>
<feature type="sequence variant" id="VAR_043997" description="In dbSNP:rs113760893." evidence="3 4">
    <original>E</original>
    <variation>D</variation>
    <location>
        <position position="244"/>
    </location>
</feature>
<feature type="sequence variant" id="VAR_043998" description="In dbSNP:rs11756238." evidence="3 4">
    <original>G</original>
    <variation>S</variation>
    <location>
        <position position="253"/>
    </location>
</feature>
<feature type="sequence variant" id="VAR_060458" description="In dbSNP:rs9262368.">
    <original>I</original>
    <variation>T</variation>
    <location>
        <position position="282"/>
    </location>
</feature>
<feature type="sequence variant" id="VAR_060459" description="In dbSNP:rs9262367.">
    <original>I</original>
    <variation>V</variation>
    <location>
        <position position="282"/>
    </location>
</feature>
<feature type="sequence variant" id="VAR_043999" description="In dbSNP:rs9262370." evidence="3 4">
    <original>V</original>
    <variation>A</variation>
    <location>
        <position position="285"/>
    </location>
</feature>
<feature type="sequence variant" id="VAR_044000" description="In dbSNP:rs41288665." evidence="3 4">
    <original>E</original>
    <variation>D</variation>
    <location>
        <position position="289"/>
    </location>
</feature>
<feature type="sequence variant" id="VAR_044001" description="In dbSNP:rs9262379." evidence="3 4">
    <original>N</original>
    <variation>S</variation>
    <location>
        <position position="313"/>
    </location>
</feature>
<feature type="sequence variant" id="VAR_044002" description="In dbSNP:rs41288675." evidence="3 4">
    <original>A</original>
    <variation>V</variation>
    <location>
        <position position="315"/>
    </location>
</feature>
<feature type="sequence variant" id="VAR_044003" description="In dbSNP:rs9262380." evidence="3 4">
    <original>D</original>
    <variation>E</variation>
    <location>
        <position position="319"/>
    </location>
</feature>
<feature type="sequence variant" id="VAR_044004" description="In dbSNP:rs41288679." evidence="3 4">
    <original>T</original>
    <variation>P</variation>
    <location>
        <position position="323"/>
    </location>
</feature>
<feature type="sequence variant" id="VAR_044005" description="In dbSNP:rs41288681." evidence="3 4">
    <original>S</original>
    <variation>N</variation>
    <location>
        <position position="328"/>
    </location>
</feature>
<feature type="sequence conflict" description="In Ref. 3; AAQ88781 and 4; CT009610." evidence="10" ref="3 4">
    <original>T</original>
    <variation>L</variation>
    <location>
        <position position="143"/>
    </location>
</feature>
<feature type="sequence conflict" description="In Ref. 4; CR759772." evidence="10" ref="4">
    <original>A</original>
    <variation>V</variation>
    <location>
        <position position="180"/>
    </location>
</feature>
<feature type="sequence conflict" description="In Ref. 3; AAQ88781 and 4; CT009610." evidence="10" ref="3 4">
    <original>P</original>
    <variation>V</variation>
    <location>
        <position position="248"/>
    </location>
</feature>
<feature type="sequence conflict" description="In Ref. 3; AAQ88781 and 4; CT009610." evidence="10" ref="3 4">
    <original>G</original>
    <variation>S</variation>
    <location>
        <position position="268"/>
    </location>
</feature>
<feature type="sequence conflict" description="In Ref. 3; AAQ88781 and 4; CT009610." evidence="10" ref="3 4">
    <original>V</original>
    <variation>T</variation>
    <location>
        <position position="278"/>
    </location>
</feature>
<feature type="sequence conflict" description="In Ref. 3; AAQ88781 and 4; CT009610." evidence="10" ref="3 4">
    <original>I</original>
    <variation>A</variation>
    <location>
        <position position="282"/>
    </location>
</feature>
<feature type="sequence conflict" description="In Ref. 3; AAQ88781 and 4; CT009610." evidence="10" ref="3 4">
    <original>P</original>
    <variation>T</variation>
    <location>
        <position position="293"/>
    </location>
</feature>
<feature type="sequence conflict" description="In Ref. 3; AAQ88781 and 4; CT009610." evidence="10" ref="3 4">
    <original>N</original>
    <variation>G</variation>
    <location>
        <position position="298"/>
    </location>
</feature>
<feature type="sequence conflict" description="In Ref. 3; AAQ88781 and 4; CT009610." evidence="10" ref="3 4">
    <original>T</original>
    <variation>V</variation>
    <location>
        <position position="308"/>
    </location>
</feature>
<feature type="sequence conflict" description="In Ref. 3; AAQ88781 and 4; CT009610." evidence="10" ref="3 4">
    <original>A</original>
    <variation>I</variation>
    <location>
        <position position="312"/>
    </location>
</feature>
<feature type="sequence conflict" description="In Ref. 3; AAQ88781 and 4; CT009610." evidence="10" ref="3 4">
    <original>S</original>
    <variation>N</variation>
    <location>
        <position position="343"/>
    </location>
</feature>
<feature type="sequence conflict" description="In Ref. 3; AAQ88781 and 4; CT009610." evidence="10" ref="3 4">
    <original>T</original>
    <variation>V</variation>
    <location>
        <position position="353"/>
    </location>
</feature>
<feature type="sequence conflict" description="In Ref. 3; AAQ88781 and 4; CT009610." evidence="10" ref="3 4">
    <original>G</original>
    <variation>E</variation>
    <location>
        <position position="364"/>
    </location>
</feature>
<feature type="sequence conflict" description="In Ref. 3; AAQ88781 and 4; CT009610." evidence="10" ref="3 4">
    <original>T</original>
    <variation>V</variation>
    <location>
        <position position="372"/>
    </location>
</feature>
<feature type="sequence conflict" description="In Ref. 3; AAQ88781 and 4; CT009610." evidence="10" ref="3 4">
    <original>V</original>
    <variation>T</variation>
    <location>
        <position position="383"/>
    </location>
</feature>
<feature type="sequence conflict" description="In Ref. 3; AAQ88781 and 4; CT009610." evidence="10" ref="3 4">
    <original>T</original>
    <variation>N</variation>
    <location>
        <position position="392"/>
    </location>
</feature>
<feature type="sequence conflict" description="In Ref. 3; AAQ88781 and 4; CT009610." evidence="10" ref="3 4">
    <original>E</original>
    <variation>D</variation>
    <location>
        <position position="394"/>
    </location>
</feature>
<feature type="sequence conflict" description="In Ref. 3; AAQ88781 and 4; CT009610." evidence="10" ref="3 4">
    <original>G</original>
    <variation>E</variation>
    <location>
        <position position="401"/>
    </location>
</feature>
<feature type="sequence conflict" description="In Ref. 3; AAQ88781 and 4; CT009610." evidence="10" ref="3 4">
    <original>A</original>
    <variation>I</variation>
    <location>
        <position position="417"/>
    </location>
</feature>
<feature type="sequence conflict" description="In Ref. 3; AAQ88781 and 4; CT009610." evidence="10" ref="3 4">
    <original>A</original>
    <variation>V</variation>
    <location>
        <position position="420"/>
    </location>
</feature>
<comment type="subcellular location">
    <subcellularLocation>
        <location evidence="7">Cell membrane</location>
        <topology evidence="7">Single-pass type I membrane protein</topology>
        <orientation evidence="7">Extracellular side</orientation>
    </subcellularLocation>
</comment>
<comment type="alternative products">
    <event type="alternative splicing"/>
    <isoform>
        <id>Q5SSG8-1</id>
        <name>1</name>
        <sequence type="displayed"/>
    </isoform>
    <isoform>
        <id>Q5SSG8-2</id>
        <name>2</name>
        <sequence type="described" ref="VSP_034188"/>
    </isoform>
    <isoform>
        <id>Q5SSG8-3</id>
        <name>3</name>
        <sequence type="described" ref="VSP_034189"/>
    </isoform>
</comment>
<comment type="tissue specificity">
    <text evidence="7">Expressed in lung, large intestine, thymus, and testis. Expressed in normal and malignant bronchial epithelial cells.</text>
</comment>
<comment type="PTM">
    <text evidence="7">O-glycosylated.</text>
</comment>
<comment type="miscellaneous">
    <text>Could be considered as a marker for lung carcinomas.</text>
</comment>
<comment type="sequence caution" evidence="10">
    <conflict type="erroneous initiation">
        <sequence resource="EMBL-CDS" id="AAI05737"/>
    </conflict>
    <text>Truncated N-terminus.</text>
</comment>
<comment type="online information" name="Mucin database">
    <link uri="http://www.medkem.gu.se/mucinbiology/databases/"/>
</comment>
<accession>Q5SSG8</accession>
<accession>B0UZT7</accession>
<accession>B4DQ55</accession>
<accession>C9JMK2</accession>
<accession>D9N007</accession>
<accession>Q0VGF1</accession>
<accession>Q3B7T2</accession>
<accession>Q5SS94</accession>
<accession>Q6UXC5</accession>
<organism>
    <name type="scientific">Homo sapiens</name>
    <name type="common">Human</name>
    <dbReference type="NCBI Taxonomy" id="9606"/>
    <lineage>
        <taxon>Eukaryota</taxon>
        <taxon>Metazoa</taxon>
        <taxon>Chordata</taxon>
        <taxon>Craniata</taxon>
        <taxon>Vertebrata</taxon>
        <taxon>Euteleostomi</taxon>
        <taxon>Mammalia</taxon>
        <taxon>Eutheria</taxon>
        <taxon>Euarchontoglires</taxon>
        <taxon>Primates</taxon>
        <taxon>Haplorrhini</taxon>
        <taxon>Catarrhini</taxon>
        <taxon>Hominidae</taxon>
        <taxon>Homo</taxon>
    </lineage>
</organism>
<proteinExistence type="evidence at protein level"/>
<reference key="1">
    <citation type="journal article" date="2004" name="Nat. Genet.">
        <title>Complete sequencing and characterization of 21,243 full-length human cDNAs.</title>
        <authorList>
            <person name="Ota T."/>
            <person name="Suzuki Y."/>
            <person name="Nishikawa T."/>
            <person name="Otsuki T."/>
            <person name="Sugiyama T."/>
            <person name="Irie R."/>
            <person name="Wakamatsu A."/>
            <person name="Hayashi K."/>
            <person name="Sato H."/>
            <person name="Nagai K."/>
            <person name="Kimura K."/>
            <person name="Makita H."/>
            <person name="Sekine M."/>
            <person name="Obayashi M."/>
            <person name="Nishi T."/>
            <person name="Shibahara T."/>
            <person name="Tanaka T."/>
            <person name="Ishii S."/>
            <person name="Yamamoto J."/>
            <person name="Saito K."/>
            <person name="Kawai Y."/>
            <person name="Isono Y."/>
            <person name="Nakamura Y."/>
            <person name="Nagahari K."/>
            <person name="Murakami K."/>
            <person name="Yasuda T."/>
            <person name="Iwayanagi T."/>
            <person name="Wagatsuma M."/>
            <person name="Shiratori A."/>
            <person name="Sudo H."/>
            <person name="Hosoiri T."/>
            <person name="Kaku Y."/>
            <person name="Kodaira H."/>
            <person name="Kondo H."/>
            <person name="Sugawara M."/>
            <person name="Takahashi M."/>
            <person name="Kanda K."/>
            <person name="Yokoi T."/>
            <person name="Furuya T."/>
            <person name="Kikkawa E."/>
            <person name="Omura Y."/>
            <person name="Abe K."/>
            <person name="Kamihara K."/>
            <person name="Katsuta N."/>
            <person name="Sato K."/>
            <person name="Tanikawa M."/>
            <person name="Yamazaki M."/>
            <person name="Ninomiya K."/>
            <person name="Ishibashi T."/>
            <person name="Yamashita H."/>
            <person name="Murakawa K."/>
            <person name="Fujimori K."/>
            <person name="Tanai H."/>
            <person name="Kimata M."/>
            <person name="Watanabe M."/>
            <person name="Hiraoka S."/>
            <person name="Chiba Y."/>
            <person name="Ishida S."/>
            <person name="Ono Y."/>
            <person name="Takiguchi S."/>
            <person name="Watanabe S."/>
            <person name="Yosida M."/>
            <person name="Hotuta T."/>
            <person name="Kusano J."/>
            <person name="Kanehori K."/>
            <person name="Takahashi-Fujii A."/>
            <person name="Hara H."/>
            <person name="Tanase T.-O."/>
            <person name="Nomura Y."/>
            <person name="Togiya S."/>
            <person name="Komai F."/>
            <person name="Hara R."/>
            <person name="Takeuchi K."/>
            <person name="Arita M."/>
            <person name="Imose N."/>
            <person name="Musashino K."/>
            <person name="Yuuki H."/>
            <person name="Oshima A."/>
            <person name="Sasaki N."/>
            <person name="Aotsuka S."/>
            <person name="Yoshikawa Y."/>
            <person name="Matsunawa H."/>
            <person name="Ichihara T."/>
            <person name="Shiohata N."/>
            <person name="Sano S."/>
            <person name="Moriya S."/>
            <person name="Momiyama H."/>
            <person name="Satoh N."/>
            <person name="Takami S."/>
            <person name="Terashima Y."/>
            <person name="Suzuki O."/>
            <person name="Nakagawa S."/>
            <person name="Senoh A."/>
            <person name="Mizoguchi H."/>
            <person name="Goto Y."/>
            <person name="Shimizu F."/>
            <person name="Wakebe H."/>
            <person name="Hishigaki H."/>
            <person name="Watanabe T."/>
            <person name="Sugiyama A."/>
            <person name="Takemoto M."/>
            <person name="Kawakami B."/>
            <person name="Yamazaki M."/>
            <person name="Watanabe K."/>
            <person name="Kumagai A."/>
            <person name="Itakura S."/>
            <person name="Fukuzumi Y."/>
            <person name="Fujimori Y."/>
            <person name="Komiyama M."/>
            <person name="Tashiro H."/>
            <person name="Tanigami A."/>
            <person name="Fujiwara T."/>
            <person name="Ono T."/>
            <person name="Yamada K."/>
            <person name="Fujii Y."/>
            <person name="Ozaki K."/>
            <person name="Hirao M."/>
            <person name="Ohmori Y."/>
            <person name="Kawabata A."/>
            <person name="Hikiji T."/>
            <person name="Kobatake N."/>
            <person name="Inagaki H."/>
            <person name="Ikema Y."/>
            <person name="Okamoto S."/>
            <person name="Okitani R."/>
            <person name="Kawakami T."/>
            <person name="Noguchi S."/>
            <person name="Itoh T."/>
            <person name="Shigeta K."/>
            <person name="Senba T."/>
            <person name="Matsumura K."/>
            <person name="Nakajima Y."/>
            <person name="Mizuno T."/>
            <person name="Morinaga M."/>
            <person name="Sasaki M."/>
            <person name="Togashi T."/>
            <person name="Oyama M."/>
            <person name="Hata H."/>
            <person name="Watanabe M."/>
            <person name="Komatsu T."/>
            <person name="Mizushima-Sugano J."/>
            <person name="Satoh T."/>
            <person name="Shirai Y."/>
            <person name="Takahashi Y."/>
            <person name="Nakagawa K."/>
            <person name="Okumura K."/>
            <person name="Nagase T."/>
            <person name="Nomura N."/>
            <person name="Kikuchi H."/>
            <person name="Masuho Y."/>
            <person name="Yamashita R."/>
            <person name="Nakai K."/>
            <person name="Yada T."/>
            <person name="Nakamura Y."/>
            <person name="Ohara O."/>
            <person name="Isogai T."/>
            <person name="Sugano S."/>
        </authorList>
    </citation>
    <scope>NUCLEOTIDE SEQUENCE [LARGE SCALE MRNA] (ISOFORM 1)</scope>
    <scope>VARIANT ALA-98</scope>
    <source>
        <tissue>Esophagus</tissue>
    </source>
</reference>
<reference key="2">
    <citation type="journal article" date="2008" name="Glycobiology">
        <title>Identification and expression of human epiglycanin/MUC21: a novel transmembrane mucin.</title>
        <authorList>
            <person name="Itoh Y."/>
            <person name="Kamata-Sakurai M."/>
            <person name="Denda-Nagai K."/>
            <person name="Nagai S."/>
            <person name="Tsuiji M."/>
            <person name="Ishii-Schrade K."/>
            <person name="Okada K."/>
            <person name="Goto A."/>
            <person name="Fukayama M."/>
            <person name="Irimura T."/>
        </authorList>
    </citation>
    <scope>NUCLEOTIDE SEQUENCE [MRNA] (ISOFORM 1)</scope>
    <scope>SUBCELLULAR LOCATION</scope>
    <scope>TISSUE SPECIFICITY</scope>
    <scope>GLYCOSYLATION</scope>
    <scope>VARIANT ALA-98</scope>
    <source>
        <tissue>Cervix adenocarcinoma</tissue>
    </source>
</reference>
<reference key="3">
    <citation type="journal article" date="2003" name="Genome Res.">
        <title>The secreted protein discovery initiative (SPDI), a large-scale effort to identify novel human secreted and transmembrane proteins: a bioinformatics assessment.</title>
        <authorList>
            <person name="Clark H.F."/>
            <person name="Gurney A.L."/>
            <person name="Abaya E."/>
            <person name="Baker K."/>
            <person name="Baldwin D.T."/>
            <person name="Brush J."/>
            <person name="Chen J."/>
            <person name="Chow B."/>
            <person name="Chui C."/>
            <person name="Crowley C."/>
            <person name="Currell B."/>
            <person name="Deuel B."/>
            <person name="Dowd P."/>
            <person name="Eaton D."/>
            <person name="Foster J.S."/>
            <person name="Grimaldi C."/>
            <person name="Gu Q."/>
            <person name="Hass P.E."/>
            <person name="Heldens S."/>
            <person name="Huang A."/>
            <person name="Kim H.S."/>
            <person name="Klimowski L."/>
            <person name="Jin Y."/>
            <person name="Johnson S."/>
            <person name="Lee J."/>
            <person name="Lewis L."/>
            <person name="Liao D."/>
            <person name="Mark M.R."/>
            <person name="Robbie E."/>
            <person name="Sanchez C."/>
            <person name="Schoenfeld J."/>
            <person name="Seshagiri S."/>
            <person name="Simmons L."/>
            <person name="Singh J."/>
            <person name="Smith V."/>
            <person name="Stinson J."/>
            <person name="Vagts A."/>
            <person name="Vandlen R.L."/>
            <person name="Watanabe C."/>
            <person name="Wieand D."/>
            <person name="Woods K."/>
            <person name="Xie M.-H."/>
            <person name="Yansura D.G."/>
            <person name="Yi S."/>
            <person name="Yu G."/>
            <person name="Yuan J."/>
            <person name="Zhang M."/>
            <person name="Zhang Z."/>
            <person name="Goddard A.D."/>
            <person name="Wood W.I."/>
            <person name="Godowski P.J."/>
            <person name="Gray A.M."/>
        </authorList>
    </citation>
    <scope>NUCLEOTIDE SEQUENCE [LARGE SCALE MRNA] (ISOFORM 2)</scope>
    <scope>VARIANTS ALA-98; GLU-139; GLY-161; ASP-244; SER-253; ALA-285; ASP-289; SER-313; VAL-315; GLU-319; PRO-323 AND ASN-328</scope>
</reference>
<reference key="4">
    <citation type="journal article" date="2003" name="Nature">
        <title>The DNA sequence and analysis of human chromosome 6.</title>
        <authorList>
            <person name="Mungall A.J."/>
            <person name="Palmer S.A."/>
            <person name="Sims S.K."/>
            <person name="Edwards C.A."/>
            <person name="Ashurst J.L."/>
            <person name="Wilming L."/>
            <person name="Jones M.C."/>
            <person name="Horton R."/>
            <person name="Hunt S.E."/>
            <person name="Scott C.E."/>
            <person name="Gilbert J.G.R."/>
            <person name="Clamp M.E."/>
            <person name="Bethel G."/>
            <person name="Milne S."/>
            <person name="Ainscough R."/>
            <person name="Almeida J.P."/>
            <person name="Ambrose K.D."/>
            <person name="Andrews T.D."/>
            <person name="Ashwell R.I.S."/>
            <person name="Babbage A.K."/>
            <person name="Bagguley C.L."/>
            <person name="Bailey J."/>
            <person name="Banerjee R."/>
            <person name="Barker D.J."/>
            <person name="Barlow K.F."/>
            <person name="Bates K."/>
            <person name="Beare D.M."/>
            <person name="Beasley H."/>
            <person name="Beasley O."/>
            <person name="Bird C.P."/>
            <person name="Blakey S.E."/>
            <person name="Bray-Allen S."/>
            <person name="Brook J."/>
            <person name="Brown A.J."/>
            <person name="Brown J.Y."/>
            <person name="Burford D.C."/>
            <person name="Burrill W."/>
            <person name="Burton J."/>
            <person name="Carder C."/>
            <person name="Carter N.P."/>
            <person name="Chapman J.C."/>
            <person name="Clark S.Y."/>
            <person name="Clark G."/>
            <person name="Clee C.M."/>
            <person name="Clegg S."/>
            <person name="Cobley V."/>
            <person name="Collier R.E."/>
            <person name="Collins J.E."/>
            <person name="Colman L.K."/>
            <person name="Corby N.R."/>
            <person name="Coville G.J."/>
            <person name="Culley K.M."/>
            <person name="Dhami P."/>
            <person name="Davies J."/>
            <person name="Dunn M."/>
            <person name="Earthrowl M.E."/>
            <person name="Ellington A.E."/>
            <person name="Evans K.A."/>
            <person name="Faulkner L."/>
            <person name="Francis M.D."/>
            <person name="Frankish A."/>
            <person name="Frankland J."/>
            <person name="French L."/>
            <person name="Garner P."/>
            <person name="Garnett J."/>
            <person name="Ghori M.J."/>
            <person name="Gilby L.M."/>
            <person name="Gillson C.J."/>
            <person name="Glithero R.J."/>
            <person name="Grafham D.V."/>
            <person name="Grant M."/>
            <person name="Gribble S."/>
            <person name="Griffiths C."/>
            <person name="Griffiths M.N.D."/>
            <person name="Hall R."/>
            <person name="Halls K.S."/>
            <person name="Hammond S."/>
            <person name="Harley J.L."/>
            <person name="Hart E.A."/>
            <person name="Heath P.D."/>
            <person name="Heathcott R."/>
            <person name="Holmes S.J."/>
            <person name="Howden P.J."/>
            <person name="Howe K.L."/>
            <person name="Howell G.R."/>
            <person name="Huckle E."/>
            <person name="Humphray S.J."/>
            <person name="Humphries M.D."/>
            <person name="Hunt A.R."/>
            <person name="Johnson C.M."/>
            <person name="Joy A.A."/>
            <person name="Kay M."/>
            <person name="Keenan S.J."/>
            <person name="Kimberley A.M."/>
            <person name="King A."/>
            <person name="Laird G.K."/>
            <person name="Langford C."/>
            <person name="Lawlor S."/>
            <person name="Leongamornlert D.A."/>
            <person name="Leversha M."/>
            <person name="Lloyd C.R."/>
            <person name="Lloyd D.M."/>
            <person name="Loveland J.E."/>
            <person name="Lovell J."/>
            <person name="Martin S."/>
            <person name="Mashreghi-Mohammadi M."/>
            <person name="Maslen G.L."/>
            <person name="Matthews L."/>
            <person name="McCann O.T."/>
            <person name="McLaren S.J."/>
            <person name="McLay K."/>
            <person name="McMurray A."/>
            <person name="Moore M.J.F."/>
            <person name="Mullikin J.C."/>
            <person name="Niblett D."/>
            <person name="Nickerson T."/>
            <person name="Novik K.L."/>
            <person name="Oliver K."/>
            <person name="Overton-Larty E.K."/>
            <person name="Parker A."/>
            <person name="Patel R."/>
            <person name="Pearce A.V."/>
            <person name="Peck A.I."/>
            <person name="Phillimore B.J.C.T."/>
            <person name="Phillips S."/>
            <person name="Plumb R.W."/>
            <person name="Porter K.M."/>
            <person name="Ramsey Y."/>
            <person name="Ranby S.A."/>
            <person name="Rice C.M."/>
            <person name="Ross M.T."/>
            <person name="Searle S.M."/>
            <person name="Sehra H.K."/>
            <person name="Sheridan E."/>
            <person name="Skuce C.D."/>
            <person name="Smith S."/>
            <person name="Smith M."/>
            <person name="Spraggon L."/>
            <person name="Squares S.L."/>
            <person name="Steward C.A."/>
            <person name="Sycamore N."/>
            <person name="Tamlyn-Hall G."/>
            <person name="Tester J."/>
            <person name="Theaker A.J."/>
            <person name="Thomas D.W."/>
            <person name="Thorpe A."/>
            <person name="Tracey A."/>
            <person name="Tromans A."/>
            <person name="Tubby B."/>
            <person name="Wall M."/>
            <person name="Wallis J.M."/>
            <person name="West A.P."/>
            <person name="White S.S."/>
            <person name="Whitehead S.L."/>
            <person name="Whittaker H."/>
            <person name="Wild A."/>
            <person name="Willey D.J."/>
            <person name="Wilmer T.E."/>
            <person name="Wood J.M."/>
            <person name="Wray P.W."/>
            <person name="Wyatt J.C."/>
            <person name="Young L."/>
            <person name="Younger R.M."/>
            <person name="Bentley D.R."/>
            <person name="Coulson A."/>
            <person name="Durbin R.M."/>
            <person name="Hubbard T."/>
            <person name="Sulston J.E."/>
            <person name="Dunham I."/>
            <person name="Rogers J."/>
            <person name="Beck S."/>
        </authorList>
    </citation>
    <scope>NUCLEOTIDE SEQUENCE [LARGE SCALE GENOMIC DNA]</scope>
    <scope>VARIANTS ALA-98; GLU-139; GLY-161; ASP-244; SER-253; ALA-285; ASP-289; SER-313; VAL-315; GLU-319; PRO-323 AND ASN-328</scope>
</reference>
<reference key="5">
    <citation type="submission" date="2005-07" db="EMBL/GenBank/DDBJ databases">
        <authorList>
            <person name="Mural R.J."/>
            <person name="Istrail S."/>
            <person name="Sutton G.G."/>
            <person name="Florea L."/>
            <person name="Halpern A.L."/>
            <person name="Mobarry C.M."/>
            <person name="Lippert R."/>
            <person name="Walenz B."/>
            <person name="Shatkay H."/>
            <person name="Dew I."/>
            <person name="Miller J.R."/>
            <person name="Flanigan M.J."/>
            <person name="Edwards N.J."/>
            <person name="Bolanos R."/>
            <person name="Fasulo D."/>
            <person name="Halldorsson B.V."/>
            <person name="Hannenhalli S."/>
            <person name="Turner R."/>
            <person name="Yooseph S."/>
            <person name="Lu F."/>
            <person name="Nusskern D.R."/>
            <person name="Shue B.C."/>
            <person name="Zheng X.H."/>
            <person name="Zhong F."/>
            <person name="Delcher A.L."/>
            <person name="Huson D.H."/>
            <person name="Kravitz S.A."/>
            <person name="Mouchard L."/>
            <person name="Reinert K."/>
            <person name="Remington K.A."/>
            <person name="Clark A.G."/>
            <person name="Waterman M.S."/>
            <person name="Eichler E.E."/>
            <person name="Adams M.D."/>
            <person name="Hunkapiller M.W."/>
            <person name="Myers E.W."/>
            <person name="Venter J.C."/>
        </authorList>
    </citation>
    <scope>NUCLEOTIDE SEQUENCE [LARGE SCALE GENOMIC DNA]</scope>
</reference>
<reference key="6">
    <citation type="journal article" date="2004" name="Genome Res.">
        <title>The status, quality, and expansion of the NIH full-length cDNA project: the Mammalian Gene Collection (MGC).</title>
        <authorList>
            <consortium name="The MGC Project Team"/>
        </authorList>
    </citation>
    <scope>NUCLEOTIDE SEQUENCE [LARGE SCALE MRNA] (ISOFORMS 1 AND 3)</scope>
    <scope>VARIANT ALA-98</scope>
</reference>
<name>MUC21_HUMAN</name>
<sequence>MKMQKGNVLLMFGLLLHLEAATNSNETSTSANTGSSVISSGASTATNSGSSVTSSGVSTATISGSSVTSNGVSIVTNSEFHTTSSGISTATNSEFSTVSSGISIATNSESSTTSSGASTATNSESSTPSSGASTATNSDSSTTSSGASTATNSDSSTTSSEASTATNSESSTTSSGASTATNSESSTVSSRASTATNSESSTTSSGASTATNSESRTTSNGAGTATNSESSTTSSGASTATNSESSTPSSGAGTATNSESSTTSSGAGTATNSESSTVSSGISTVTNSESSTPSSGANTATNSESSTTSSGANTATNSDSSTTSSGASTATNSESSTTSSGASTATNSESSTTSSGASTATNSGSSTTSSGTSTATNSESSTVSSGASTATTSESSTTSSGASTATNSESSTVSSGASTATNSESSTTSSGANTATNSGSSVTSAGSGTAALTGMHTTSHSASTAVSEAKPGGSLVPWEIFLITLVSVVAAVGLFAGLFFCVRNSLSLRNTFNTAVYHPHGLNHGLGPGPGGNHGAPHRPRWSPNWFWRRPVSSIAMEMSGRNSGP</sequence>
<keyword id="KW-0025">Alternative splicing</keyword>
<keyword id="KW-1003">Cell membrane</keyword>
<keyword id="KW-0325">Glycoprotein</keyword>
<keyword id="KW-0472">Membrane</keyword>
<keyword id="KW-1267">Proteomics identification</keyword>
<keyword id="KW-1185">Reference proteome</keyword>
<keyword id="KW-0677">Repeat</keyword>
<keyword id="KW-0732">Signal</keyword>
<keyword id="KW-0812">Transmembrane</keyword>
<keyword id="KW-1133">Transmembrane helix</keyword>
<gene>
    <name type="primary">MUC21</name>
    <name type="synonym">C6orf205</name>
    <name type="ORF">UNQ697/PRO1342</name>
</gene>
<evidence type="ECO:0000255" key="1"/>
<evidence type="ECO:0000256" key="2">
    <source>
        <dbReference type="SAM" id="MobiDB-lite"/>
    </source>
</evidence>
<evidence type="ECO:0000269" key="3">
    <source>
    </source>
</evidence>
<evidence type="ECO:0000269" key="4">
    <source>
    </source>
</evidence>
<evidence type="ECO:0000269" key="5">
    <source>
    </source>
</evidence>
<evidence type="ECO:0000269" key="6">
    <source>
    </source>
</evidence>
<evidence type="ECO:0000269" key="7">
    <source>
    </source>
</evidence>
<evidence type="ECO:0000303" key="8">
    <source>
    </source>
</evidence>
<evidence type="ECO:0000303" key="9">
    <source>
    </source>
</evidence>
<evidence type="ECO:0000305" key="10"/>
<dbReference type="EMBL" id="AK298642">
    <property type="protein sequence ID" value="BAG60817.1"/>
    <property type="molecule type" value="mRNA"/>
</dbReference>
<dbReference type="EMBL" id="AB242595">
    <property type="protein sequence ID" value="BAF92842.1"/>
    <property type="molecule type" value="mRNA"/>
</dbReference>
<dbReference type="EMBL" id="HM596784">
    <property type="protein sequence ID" value="ADJ96647.1"/>
    <property type="molecule type" value="mRNA"/>
</dbReference>
<dbReference type="EMBL" id="AY358415">
    <property type="protein sequence ID" value="AAQ88781.1"/>
    <property type="molecule type" value="mRNA"/>
</dbReference>
<dbReference type="EMBL" id="AL663093">
    <property type="status" value="NOT_ANNOTATED_CDS"/>
    <property type="molecule type" value="Genomic_DNA"/>
</dbReference>
<dbReference type="EMBL" id="AL669830">
    <property type="status" value="NOT_ANNOTATED_CDS"/>
    <property type="molecule type" value="Genomic_DNA"/>
</dbReference>
<dbReference type="EMBL" id="CR759747">
    <property type="status" value="NOT_ANNOTATED_CDS"/>
    <property type="molecule type" value="Genomic_DNA"/>
</dbReference>
<dbReference type="EMBL" id="CR759772">
    <property type="status" value="NOT_ANNOTATED_CDS"/>
    <property type="molecule type" value="Genomic_DNA"/>
</dbReference>
<dbReference type="EMBL" id="CR759964">
    <property type="status" value="NOT_ANNOTATED_CDS"/>
    <property type="molecule type" value="Genomic_DNA"/>
</dbReference>
<dbReference type="EMBL" id="CT009610">
    <property type="status" value="NOT_ANNOTATED_CDS"/>
    <property type="molecule type" value="Genomic_DNA"/>
</dbReference>
<dbReference type="EMBL" id="CH471081">
    <property type="protein sequence ID" value="EAX03353.1"/>
    <property type="status" value="ALT_SEQ"/>
    <property type="molecule type" value="Genomic_DNA"/>
</dbReference>
<dbReference type="EMBL" id="BC105735">
    <property type="protein sequence ID" value="AAI05736.1"/>
    <property type="molecule type" value="mRNA"/>
</dbReference>
<dbReference type="EMBL" id="BC105736">
    <property type="protein sequence ID" value="AAI05737.1"/>
    <property type="status" value="ALT_INIT"/>
    <property type="molecule type" value="mRNA"/>
</dbReference>
<dbReference type="EMBL" id="BC105737">
    <property type="protein sequence ID" value="AAI05738.1"/>
    <property type="molecule type" value="mRNA"/>
</dbReference>
<dbReference type="EMBL" id="BC107478">
    <property type="protein sequence ID" value="AAI07479.1"/>
    <property type="molecule type" value="mRNA"/>
</dbReference>
<dbReference type="CCDS" id="CCDS34388.1">
    <molecule id="Q5SSG8-1"/>
</dbReference>
<dbReference type="RefSeq" id="NP_001010909.2">
    <molecule id="Q5SSG8-1"/>
    <property type="nucleotide sequence ID" value="NM_001010909.5"/>
</dbReference>
<dbReference type="RefSeq" id="NP_001309299.1">
    <property type="nucleotide sequence ID" value="NM_001322370.1"/>
</dbReference>
<dbReference type="BioGRID" id="134350">
    <property type="interactions" value="1"/>
</dbReference>
<dbReference type="FunCoup" id="Q5SSG8">
    <property type="interactions" value="2"/>
</dbReference>
<dbReference type="STRING" id="9606.ENSP00000365473"/>
<dbReference type="GlyCosmos" id="Q5SSG8">
    <property type="glycosylation" value="1 site, No reported glycans"/>
</dbReference>
<dbReference type="GlyGen" id="Q5SSG8">
    <property type="glycosylation" value="10 sites, 1 O-linked glycan (6 sites)"/>
</dbReference>
<dbReference type="iPTMnet" id="Q5SSG8"/>
<dbReference type="PhosphoSitePlus" id="Q5SSG8"/>
<dbReference type="BioMuta" id="MUC21"/>
<dbReference type="DMDM" id="296439229"/>
<dbReference type="MassIVE" id="Q5SSG8"/>
<dbReference type="PaxDb" id="9606-ENSP00000365473"/>
<dbReference type="PeptideAtlas" id="Q5SSG8"/>
<dbReference type="Antibodypedia" id="65411">
    <property type="antibodies" value="8 antibodies from 7 providers"/>
</dbReference>
<dbReference type="DNASU" id="394263"/>
<dbReference type="Ensembl" id="ENST00000376296.3">
    <molecule id="Q5SSG8-1"/>
    <property type="protein sequence ID" value="ENSP00000365473.3"/>
    <property type="gene ID" value="ENSG00000204544.5"/>
</dbReference>
<dbReference type="Ensembl" id="ENST00000549059.2">
    <molecule id="Q5SSG8-3"/>
    <property type="protein sequence ID" value="ENSP00000447840.1"/>
    <property type="gene ID" value="ENSG00000227506.5"/>
</dbReference>
<dbReference type="GeneID" id="394263"/>
<dbReference type="KEGG" id="hsa:394263"/>
<dbReference type="MANE-Select" id="ENST00000376296.3">
    <property type="protein sequence ID" value="ENSP00000365473.3"/>
    <property type="RefSeq nucleotide sequence ID" value="NM_001010909.5"/>
    <property type="RefSeq protein sequence ID" value="NP_001010909.2"/>
</dbReference>
<dbReference type="UCSC" id="uc003nsh.3">
    <molecule id="Q5SSG8-1"/>
    <property type="organism name" value="human"/>
</dbReference>
<dbReference type="AGR" id="HGNC:21661"/>
<dbReference type="CTD" id="394263"/>
<dbReference type="DisGeNET" id="394263"/>
<dbReference type="GeneCards" id="MUC21"/>
<dbReference type="HGNC" id="HGNC:21661">
    <property type="gene designation" value="MUC21"/>
</dbReference>
<dbReference type="HPA" id="ENSG00000204544">
    <property type="expression patterns" value="Tissue enhanced (cervix, esophagus, vagina)"/>
</dbReference>
<dbReference type="MIM" id="616991">
    <property type="type" value="gene"/>
</dbReference>
<dbReference type="neXtProt" id="NX_Q5SSG8"/>
<dbReference type="OpenTargets" id="ENSG00000204544"/>
<dbReference type="PharmGKB" id="PA162396305"/>
<dbReference type="VEuPathDB" id="HostDB:ENSG00000204544"/>
<dbReference type="eggNOG" id="ENOG502RKVF">
    <property type="taxonomic scope" value="Eukaryota"/>
</dbReference>
<dbReference type="GeneTree" id="ENSGT00940000164618"/>
<dbReference type="HOGENOM" id="CLU_036156_1_0_1"/>
<dbReference type="InParanoid" id="Q5SSG8"/>
<dbReference type="OMA" id="NTLTHGH"/>
<dbReference type="OrthoDB" id="9838499at2759"/>
<dbReference type="PAN-GO" id="Q5SSG8">
    <property type="GO annotations" value="2 GO annotations based on evolutionary models"/>
</dbReference>
<dbReference type="PathwayCommons" id="Q5SSG8"/>
<dbReference type="Reactome" id="R-HSA-5083625">
    <property type="pathway name" value="Defective GALNT3 causes HFTC"/>
</dbReference>
<dbReference type="Reactome" id="R-HSA-5083632">
    <property type="pathway name" value="Defective C1GALT1C1 causes TNPS"/>
</dbReference>
<dbReference type="Reactome" id="R-HSA-5083636">
    <property type="pathway name" value="Defective GALNT12 causes CRCS1"/>
</dbReference>
<dbReference type="Reactome" id="R-HSA-5621480">
    <property type="pathway name" value="Dectin-2 family"/>
</dbReference>
<dbReference type="Reactome" id="R-HSA-913709">
    <property type="pathway name" value="O-linked glycosylation of mucins"/>
</dbReference>
<dbReference type="Reactome" id="R-HSA-977068">
    <property type="pathway name" value="Termination of O-glycan biosynthesis"/>
</dbReference>
<dbReference type="BioGRID-ORCS" id="394263">
    <property type="hits" value="15 hits in 1155 CRISPR screens"/>
</dbReference>
<dbReference type="ChiTaRS" id="MUC21">
    <property type="organism name" value="human"/>
</dbReference>
<dbReference type="GenomeRNAi" id="394263"/>
<dbReference type="Pharos" id="Q5SSG8">
    <property type="development level" value="Tbio"/>
</dbReference>
<dbReference type="PRO" id="PR:Q5SSG8"/>
<dbReference type="Proteomes" id="UP000005640">
    <property type="component" value="Chromosome 6"/>
</dbReference>
<dbReference type="RNAct" id="Q5SSG8">
    <property type="molecule type" value="protein"/>
</dbReference>
<dbReference type="Bgee" id="ENSG00000204544">
    <property type="expression patterns" value="Expressed in lower esophagus mucosa and 68 other cell types or tissues"/>
</dbReference>
<dbReference type="ExpressionAtlas" id="Q5SSG8">
    <property type="expression patterns" value="baseline and differential"/>
</dbReference>
<dbReference type="GO" id="GO:0005796">
    <property type="term" value="C:Golgi lumen"/>
    <property type="evidence" value="ECO:0000304"/>
    <property type="project" value="Reactome"/>
</dbReference>
<dbReference type="GO" id="GO:0005886">
    <property type="term" value="C:plasma membrane"/>
    <property type="evidence" value="ECO:0000318"/>
    <property type="project" value="GO_Central"/>
</dbReference>
<dbReference type="GO" id="GO:0022408">
    <property type="term" value="P:negative regulation of cell-cell adhesion"/>
    <property type="evidence" value="ECO:0000318"/>
    <property type="project" value="GO_Central"/>
</dbReference>
<dbReference type="InterPro" id="IPR028199">
    <property type="entry name" value="Mucin_dom"/>
</dbReference>
<dbReference type="InterPro" id="IPR008519">
    <property type="entry name" value="Tandem-repeating_mucin"/>
</dbReference>
<dbReference type="Pfam" id="PF14654">
    <property type="entry name" value="Epiglycanin_C"/>
    <property type="match status" value="1"/>
</dbReference>
<dbReference type="Pfam" id="PF05647">
    <property type="entry name" value="Epiglycanin_TR"/>
    <property type="match status" value="12"/>
</dbReference>